<accession>B1J011</accession>
<proteinExistence type="inferred from homology"/>
<comment type="function">
    <text evidence="1">Cleaves peptides in various proteins in a process that requires ATP hydrolysis. Has a chymotrypsin-like activity. Plays a major role in the degradation of misfolded proteins.</text>
</comment>
<comment type="catalytic activity">
    <reaction evidence="1">
        <text>Hydrolysis of proteins to small peptides in the presence of ATP and magnesium. alpha-casein is the usual test substrate. In the absence of ATP, only oligopeptides shorter than five residues are hydrolyzed (such as succinyl-Leu-Tyr-|-NHMec, and Leu-Tyr-Leu-|-Tyr-Trp, in which cleavage of the -Tyr-|-Leu- and -Tyr-|-Trp bonds also occurs).</text>
        <dbReference type="EC" id="3.4.21.92"/>
    </reaction>
</comment>
<comment type="subunit">
    <text evidence="1">Fourteen ClpP subunits assemble into 2 heptameric rings which stack back to back to give a disk-like structure with a central cavity, resembling the structure of eukaryotic proteasomes. Component of the ClpAP and ClpXP complexes.</text>
</comment>
<comment type="subcellular location">
    <subcellularLocation>
        <location evidence="1">Cytoplasm</location>
    </subcellularLocation>
</comment>
<comment type="similarity">
    <text evidence="1">Belongs to the peptidase S14 family.</text>
</comment>
<protein>
    <recommendedName>
        <fullName evidence="1">ATP-dependent Clp protease proteolytic subunit</fullName>
        <ecNumber evidence="1">3.4.21.92</ecNumber>
    </recommendedName>
    <alternativeName>
        <fullName evidence="1">Endopeptidase Clp</fullName>
    </alternativeName>
</protein>
<reference key="1">
    <citation type="submission" date="2008-02" db="EMBL/GenBank/DDBJ databases">
        <title>Complete sequence of Escherichia coli C str. ATCC 8739.</title>
        <authorList>
            <person name="Copeland A."/>
            <person name="Lucas S."/>
            <person name="Lapidus A."/>
            <person name="Glavina del Rio T."/>
            <person name="Dalin E."/>
            <person name="Tice H."/>
            <person name="Bruce D."/>
            <person name="Goodwin L."/>
            <person name="Pitluck S."/>
            <person name="Kiss H."/>
            <person name="Brettin T."/>
            <person name="Detter J.C."/>
            <person name="Han C."/>
            <person name="Kuske C.R."/>
            <person name="Schmutz J."/>
            <person name="Larimer F."/>
            <person name="Land M."/>
            <person name="Hauser L."/>
            <person name="Kyrpides N."/>
            <person name="Mikhailova N."/>
            <person name="Ingram L."/>
            <person name="Richardson P."/>
        </authorList>
    </citation>
    <scope>NUCLEOTIDE SEQUENCE [LARGE SCALE GENOMIC DNA]</scope>
    <source>
        <strain>ATCC 8739 / DSM 1576 / NBRC 3972 / NCIMB 8545 / WDCM 00012 / Crooks</strain>
    </source>
</reference>
<organism>
    <name type="scientific">Escherichia coli (strain ATCC 8739 / DSM 1576 / NBRC 3972 / NCIMB 8545 / WDCM 00012 / Crooks)</name>
    <dbReference type="NCBI Taxonomy" id="481805"/>
    <lineage>
        <taxon>Bacteria</taxon>
        <taxon>Pseudomonadati</taxon>
        <taxon>Pseudomonadota</taxon>
        <taxon>Gammaproteobacteria</taxon>
        <taxon>Enterobacterales</taxon>
        <taxon>Enterobacteriaceae</taxon>
        <taxon>Escherichia</taxon>
    </lineage>
</organism>
<evidence type="ECO:0000255" key="1">
    <source>
        <dbReference type="HAMAP-Rule" id="MF_00444"/>
    </source>
</evidence>
<sequence length="207" mass="23187">MSYSGERDNFAPHMALVPMVIEQTSRGERSFDIYSRLLKERVIFLTGQVEDHMANLIVAQMLFLEAENPEKDIYLYINSPGGVITAGMSIYDTMQFIKPDVSTICMGQAASMGAFLLTAGAKGKRFCLPNSRVMIHQPLGGYQGQATDIEIHAREILKVKGRMNELMALHTGQSLEQIERDTERDRFLSAPEAVEYGLVDSILTHRN</sequence>
<feature type="chain" id="PRO_1000080890" description="ATP-dependent Clp protease proteolytic subunit">
    <location>
        <begin position="1"/>
        <end position="207"/>
    </location>
</feature>
<feature type="active site" description="Nucleophile" evidence="1">
    <location>
        <position position="111"/>
    </location>
</feature>
<feature type="active site" evidence="1">
    <location>
        <position position="136"/>
    </location>
</feature>
<dbReference type="EC" id="3.4.21.92" evidence="1"/>
<dbReference type="EMBL" id="CP000946">
    <property type="protein sequence ID" value="ACA78817.1"/>
    <property type="molecule type" value="Genomic_DNA"/>
</dbReference>
<dbReference type="RefSeq" id="WP_000122253.1">
    <property type="nucleotide sequence ID" value="NZ_MTFT01000010.1"/>
</dbReference>
<dbReference type="BMRB" id="B1J011"/>
<dbReference type="SMR" id="B1J011"/>
<dbReference type="MEROPS" id="S14.001"/>
<dbReference type="GeneID" id="93777017"/>
<dbReference type="KEGG" id="ecl:EcolC_3195"/>
<dbReference type="HOGENOM" id="CLU_058707_3_2_6"/>
<dbReference type="GO" id="GO:0005737">
    <property type="term" value="C:cytoplasm"/>
    <property type="evidence" value="ECO:0007669"/>
    <property type="project" value="UniProtKB-SubCell"/>
</dbReference>
<dbReference type="GO" id="GO:0009368">
    <property type="term" value="C:endopeptidase Clp complex"/>
    <property type="evidence" value="ECO:0007669"/>
    <property type="project" value="TreeGrafter"/>
</dbReference>
<dbReference type="GO" id="GO:0004176">
    <property type="term" value="F:ATP-dependent peptidase activity"/>
    <property type="evidence" value="ECO:0007669"/>
    <property type="project" value="InterPro"/>
</dbReference>
<dbReference type="GO" id="GO:0051117">
    <property type="term" value="F:ATPase binding"/>
    <property type="evidence" value="ECO:0007669"/>
    <property type="project" value="TreeGrafter"/>
</dbReference>
<dbReference type="GO" id="GO:0004252">
    <property type="term" value="F:serine-type endopeptidase activity"/>
    <property type="evidence" value="ECO:0007669"/>
    <property type="project" value="UniProtKB-UniRule"/>
</dbReference>
<dbReference type="GO" id="GO:0006515">
    <property type="term" value="P:protein quality control for misfolded or incompletely synthesized proteins"/>
    <property type="evidence" value="ECO:0007669"/>
    <property type="project" value="TreeGrafter"/>
</dbReference>
<dbReference type="CDD" id="cd07017">
    <property type="entry name" value="S14_ClpP_2"/>
    <property type="match status" value="1"/>
</dbReference>
<dbReference type="FunFam" id="3.90.226.10:FF:000001">
    <property type="entry name" value="ATP-dependent Clp protease proteolytic subunit"/>
    <property type="match status" value="1"/>
</dbReference>
<dbReference type="Gene3D" id="3.90.226.10">
    <property type="entry name" value="2-enoyl-CoA Hydratase, Chain A, domain 1"/>
    <property type="match status" value="1"/>
</dbReference>
<dbReference type="HAMAP" id="MF_00444">
    <property type="entry name" value="ClpP"/>
    <property type="match status" value="1"/>
</dbReference>
<dbReference type="InterPro" id="IPR001907">
    <property type="entry name" value="ClpP"/>
</dbReference>
<dbReference type="InterPro" id="IPR029045">
    <property type="entry name" value="ClpP/crotonase-like_dom_sf"/>
</dbReference>
<dbReference type="InterPro" id="IPR023562">
    <property type="entry name" value="ClpP/TepA"/>
</dbReference>
<dbReference type="InterPro" id="IPR033135">
    <property type="entry name" value="ClpP_His_AS"/>
</dbReference>
<dbReference type="InterPro" id="IPR018215">
    <property type="entry name" value="ClpP_Ser_AS"/>
</dbReference>
<dbReference type="NCBIfam" id="TIGR00493">
    <property type="entry name" value="clpP"/>
    <property type="match status" value="1"/>
</dbReference>
<dbReference type="NCBIfam" id="NF001368">
    <property type="entry name" value="PRK00277.1"/>
    <property type="match status" value="1"/>
</dbReference>
<dbReference type="NCBIfam" id="NF009205">
    <property type="entry name" value="PRK12553.1"/>
    <property type="match status" value="1"/>
</dbReference>
<dbReference type="PANTHER" id="PTHR10381">
    <property type="entry name" value="ATP-DEPENDENT CLP PROTEASE PROTEOLYTIC SUBUNIT"/>
    <property type="match status" value="1"/>
</dbReference>
<dbReference type="PANTHER" id="PTHR10381:SF70">
    <property type="entry name" value="ATP-DEPENDENT CLP PROTEASE PROTEOLYTIC SUBUNIT"/>
    <property type="match status" value="1"/>
</dbReference>
<dbReference type="Pfam" id="PF00574">
    <property type="entry name" value="CLP_protease"/>
    <property type="match status" value="1"/>
</dbReference>
<dbReference type="PRINTS" id="PR00127">
    <property type="entry name" value="CLPPROTEASEP"/>
</dbReference>
<dbReference type="SUPFAM" id="SSF52096">
    <property type="entry name" value="ClpP/crotonase"/>
    <property type="match status" value="1"/>
</dbReference>
<dbReference type="PROSITE" id="PS00382">
    <property type="entry name" value="CLP_PROTEASE_HIS"/>
    <property type="match status" value="1"/>
</dbReference>
<dbReference type="PROSITE" id="PS00381">
    <property type="entry name" value="CLP_PROTEASE_SER"/>
    <property type="match status" value="1"/>
</dbReference>
<name>CLPP_ECOLC</name>
<keyword id="KW-0963">Cytoplasm</keyword>
<keyword id="KW-0378">Hydrolase</keyword>
<keyword id="KW-0645">Protease</keyword>
<keyword id="KW-0720">Serine protease</keyword>
<gene>
    <name evidence="1" type="primary">clpP</name>
    <name type="ordered locus">EcolC_3195</name>
</gene>